<gene>
    <name evidence="1" type="primary">queC</name>
    <name type="ordered locus">Ta0951</name>
</gene>
<organism>
    <name type="scientific">Thermoplasma acidophilum (strain ATCC 25905 / DSM 1728 / JCM 9062 / NBRC 15155 / AMRC-C165)</name>
    <dbReference type="NCBI Taxonomy" id="273075"/>
    <lineage>
        <taxon>Archaea</taxon>
        <taxon>Methanobacteriati</taxon>
        <taxon>Thermoplasmatota</taxon>
        <taxon>Thermoplasmata</taxon>
        <taxon>Thermoplasmatales</taxon>
        <taxon>Thermoplasmataceae</taxon>
        <taxon>Thermoplasma</taxon>
    </lineage>
</organism>
<name>QUEC_THEAC</name>
<protein>
    <recommendedName>
        <fullName evidence="1">7-cyano-7-deazaguanine synthase</fullName>
        <ecNumber evidence="1">6.3.4.20</ecNumber>
    </recommendedName>
    <alternativeName>
        <fullName evidence="1">7-cyano-7-carbaguanine synthase</fullName>
    </alternativeName>
    <alternativeName>
        <fullName evidence="1">Archaeosine biosynthesis protein QueC</fullName>
    </alternativeName>
    <alternativeName>
        <fullName evidence="1">PreQ(0) synthase</fullName>
    </alternativeName>
</protein>
<feature type="chain" id="PRO_0000246993" description="7-cyano-7-deazaguanine synthase">
    <location>
        <begin position="1"/>
        <end position="238"/>
    </location>
</feature>
<feature type="binding site" evidence="1">
    <location>
        <begin position="10"/>
        <end position="20"/>
    </location>
    <ligand>
        <name>ATP</name>
        <dbReference type="ChEBI" id="CHEBI:30616"/>
    </ligand>
</feature>
<feature type="binding site" evidence="1">
    <location>
        <position position="190"/>
    </location>
    <ligand>
        <name>Zn(2+)</name>
        <dbReference type="ChEBI" id="CHEBI:29105"/>
    </ligand>
</feature>
<feature type="binding site" evidence="1">
    <location>
        <position position="198"/>
    </location>
    <ligand>
        <name>Zn(2+)</name>
        <dbReference type="ChEBI" id="CHEBI:29105"/>
    </ligand>
</feature>
<feature type="binding site" evidence="1">
    <location>
        <position position="201"/>
    </location>
    <ligand>
        <name>Zn(2+)</name>
        <dbReference type="ChEBI" id="CHEBI:29105"/>
    </ligand>
</feature>
<feature type="binding site" evidence="1">
    <location>
        <position position="204"/>
    </location>
    <ligand>
        <name>Zn(2+)</name>
        <dbReference type="ChEBI" id="CHEBI:29105"/>
    </ligand>
</feature>
<keyword id="KW-0067">ATP-binding</keyword>
<keyword id="KW-0436">Ligase</keyword>
<keyword id="KW-0479">Metal-binding</keyword>
<keyword id="KW-0547">Nucleotide-binding</keyword>
<keyword id="KW-1185">Reference proteome</keyword>
<keyword id="KW-0862">Zinc</keyword>
<comment type="function">
    <text evidence="1">Catalyzes the ATP-dependent conversion of 7-carboxy-7-deazaguanine (CDG) to 7-cyano-7-deazaguanine (preQ(0)).</text>
</comment>
<comment type="catalytic activity">
    <reaction evidence="1">
        <text>7-carboxy-7-deazaguanine + NH4(+) + ATP = 7-cyano-7-deazaguanine + ADP + phosphate + H2O + H(+)</text>
        <dbReference type="Rhea" id="RHEA:27982"/>
        <dbReference type="ChEBI" id="CHEBI:15377"/>
        <dbReference type="ChEBI" id="CHEBI:15378"/>
        <dbReference type="ChEBI" id="CHEBI:28938"/>
        <dbReference type="ChEBI" id="CHEBI:30616"/>
        <dbReference type="ChEBI" id="CHEBI:43474"/>
        <dbReference type="ChEBI" id="CHEBI:45075"/>
        <dbReference type="ChEBI" id="CHEBI:61036"/>
        <dbReference type="ChEBI" id="CHEBI:456216"/>
        <dbReference type="EC" id="6.3.4.20"/>
    </reaction>
</comment>
<comment type="cofactor">
    <cofactor evidence="1">
        <name>Zn(2+)</name>
        <dbReference type="ChEBI" id="CHEBI:29105"/>
    </cofactor>
    <text evidence="1">Binds 1 zinc ion per subunit.</text>
</comment>
<comment type="pathway">
    <text evidence="1">Purine metabolism; 7-cyano-7-deazaguanine biosynthesis.</text>
</comment>
<comment type="similarity">
    <text evidence="1">Belongs to the QueC family.</text>
</comment>
<dbReference type="EC" id="6.3.4.20" evidence="1"/>
<dbReference type="EMBL" id="AL445066">
    <property type="protein sequence ID" value="CAC12080.1"/>
    <property type="molecule type" value="Genomic_DNA"/>
</dbReference>
<dbReference type="RefSeq" id="WP_010901362.1">
    <property type="nucleotide sequence ID" value="NC_002578.1"/>
</dbReference>
<dbReference type="SMR" id="Q9HJL6"/>
<dbReference type="FunCoup" id="Q9HJL6">
    <property type="interactions" value="1"/>
</dbReference>
<dbReference type="STRING" id="273075.gene:9572169"/>
<dbReference type="PaxDb" id="273075-Ta0951"/>
<dbReference type="EnsemblBacteria" id="CAC12080">
    <property type="protein sequence ID" value="CAC12080"/>
    <property type="gene ID" value="CAC12080"/>
</dbReference>
<dbReference type="KEGG" id="tac:Ta0951"/>
<dbReference type="eggNOG" id="arCOG00039">
    <property type="taxonomic scope" value="Archaea"/>
</dbReference>
<dbReference type="HOGENOM" id="CLU_081854_1_0_2"/>
<dbReference type="InParanoid" id="Q9HJL6"/>
<dbReference type="OrthoDB" id="6532at2157"/>
<dbReference type="UniPathway" id="UPA00391"/>
<dbReference type="Proteomes" id="UP000001024">
    <property type="component" value="Chromosome"/>
</dbReference>
<dbReference type="GO" id="GO:0005524">
    <property type="term" value="F:ATP binding"/>
    <property type="evidence" value="ECO:0007669"/>
    <property type="project" value="UniProtKB-UniRule"/>
</dbReference>
<dbReference type="GO" id="GO:0016879">
    <property type="term" value="F:ligase activity, forming carbon-nitrogen bonds"/>
    <property type="evidence" value="ECO:0007669"/>
    <property type="project" value="UniProtKB-UniRule"/>
</dbReference>
<dbReference type="GO" id="GO:0008270">
    <property type="term" value="F:zinc ion binding"/>
    <property type="evidence" value="ECO:0007669"/>
    <property type="project" value="UniProtKB-UniRule"/>
</dbReference>
<dbReference type="CDD" id="cd01995">
    <property type="entry name" value="QueC-like"/>
    <property type="match status" value="1"/>
</dbReference>
<dbReference type="Gene3D" id="3.40.50.620">
    <property type="entry name" value="HUPs"/>
    <property type="match status" value="1"/>
</dbReference>
<dbReference type="HAMAP" id="MF_01633">
    <property type="entry name" value="QueC"/>
    <property type="match status" value="1"/>
</dbReference>
<dbReference type="InterPro" id="IPR018317">
    <property type="entry name" value="QueC"/>
</dbReference>
<dbReference type="InterPro" id="IPR014729">
    <property type="entry name" value="Rossmann-like_a/b/a_fold"/>
</dbReference>
<dbReference type="NCBIfam" id="TIGR00364">
    <property type="entry name" value="7-cyano-7-deazaguanine synthase QueC"/>
    <property type="match status" value="1"/>
</dbReference>
<dbReference type="PANTHER" id="PTHR42914">
    <property type="entry name" value="7-CYANO-7-DEAZAGUANINE SYNTHASE"/>
    <property type="match status" value="1"/>
</dbReference>
<dbReference type="PANTHER" id="PTHR42914:SF1">
    <property type="entry name" value="7-CYANO-7-DEAZAGUANINE SYNTHASE"/>
    <property type="match status" value="1"/>
</dbReference>
<dbReference type="Pfam" id="PF06508">
    <property type="entry name" value="QueC"/>
    <property type="match status" value="1"/>
</dbReference>
<dbReference type="PIRSF" id="PIRSF006293">
    <property type="entry name" value="ExsB"/>
    <property type="match status" value="1"/>
</dbReference>
<dbReference type="SUPFAM" id="SSF52402">
    <property type="entry name" value="Adenine nucleotide alpha hydrolases-like"/>
    <property type="match status" value="1"/>
</dbReference>
<accession>Q9HJL6</accession>
<sequence length="238" mass="26646">MERKKAVVLLSGGLDSSTVLAYAISLGYEVHAISFDYGQRHSREMNSSEELAKYYGVDRKIVHVDLRSIGKSALTDDIEVPSRDLESIPEEIPVTYVPARNTIFLSIAAAYAESIGSTDIFIGANAIDYSGYPDCRPEYFNAMEKALTLGTEIGLRKGMHINVPLQYLTKADIIRMGLKLGVPYEKTWSCYKGGEKACGECDSCLLRLKGFMEAGSEDPLEYEKYPTFYKDYIEKRKK</sequence>
<evidence type="ECO:0000255" key="1">
    <source>
        <dbReference type="HAMAP-Rule" id="MF_01633"/>
    </source>
</evidence>
<reference key="1">
    <citation type="journal article" date="2000" name="Nature">
        <title>The genome sequence of the thermoacidophilic scavenger Thermoplasma acidophilum.</title>
        <authorList>
            <person name="Ruepp A."/>
            <person name="Graml W."/>
            <person name="Santos-Martinez M.-L."/>
            <person name="Koretke K.K."/>
            <person name="Volker C."/>
            <person name="Mewes H.-W."/>
            <person name="Frishman D."/>
            <person name="Stocker S."/>
            <person name="Lupas A.N."/>
            <person name="Baumeister W."/>
        </authorList>
    </citation>
    <scope>NUCLEOTIDE SEQUENCE [LARGE SCALE GENOMIC DNA]</scope>
    <source>
        <strain>ATCC 25905 / DSM 1728 / JCM 9062 / NBRC 15155 / AMRC-C165</strain>
    </source>
</reference>
<proteinExistence type="inferred from homology"/>